<comment type="catalytic activity">
    <reaction evidence="1">
        <text>tRNA(Phe) + L-phenylalanine + ATP = L-phenylalanyl-tRNA(Phe) + AMP + diphosphate + H(+)</text>
        <dbReference type="Rhea" id="RHEA:19413"/>
        <dbReference type="Rhea" id="RHEA-COMP:9668"/>
        <dbReference type="Rhea" id="RHEA-COMP:9699"/>
        <dbReference type="ChEBI" id="CHEBI:15378"/>
        <dbReference type="ChEBI" id="CHEBI:30616"/>
        <dbReference type="ChEBI" id="CHEBI:33019"/>
        <dbReference type="ChEBI" id="CHEBI:58095"/>
        <dbReference type="ChEBI" id="CHEBI:78442"/>
        <dbReference type="ChEBI" id="CHEBI:78531"/>
        <dbReference type="ChEBI" id="CHEBI:456215"/>
        <dbReference type="EC" id="6.1.1.20"/>
    </reaction>
</comment>
<comment type="cofactor">
    <cofactor evidence="1">
        <name>Mg(2+)</name>
        <dbReference type="ChEBI" id="CHEBI:18420"/>
    </cofactor>
    <text evidence="1">Binds 2 magnesium ions per tetramer.</text>
</comment>
<comment type="subunit">
    <text evidence="1">Tetramer of two alpha and two beta subunits.</text>
</comment>
<comment type="subcellular location">
    <subcellularLocation>
        <location evidence="1">Cytoplasm</location>
    </subcellularLocation>
</comment>
<comment type="similarity">
    <text evidence="1">Belongs to the class-II aminoacyl-tRNA synthetase family. Phe-tRNA synthetase alpha subunit type 1 subfamily.</text>
</comment>
<accession>B3R4J5</accession>
<gene>
    <name evidence="1" type="primary">pheS</name>
    <name type="ordered locus">RALTA_A1265</name>
</gene>
<feature type="chain" id="PRO_1000114864" description="Phenylalanine--tRNA ligase alpha subunit">
    <location>
        <begin position="1"/>
        <end position="343"/>
    </location>
</feature>
<feature type="binding site" evidence="1">
    <location>
        <position position="268"/>
    </location>
    <ligand>
        <name>Mg(2+)</name>
        <dbReference type="ChEBI" id="CHEBI:18420"/>
        <note>shared with beta subunit</note>
    </ligand>
</feature>
<sequence length="343" mass="38575">MSQDLDQIVADAQAAFAAANDNATLENEKARFLGKTGALTELLKGLGKLDPETRKSEGARINQVKQQVEAALQARRQALADALMNARLAAEAIDVTLPGRAVARGSLHPVMRTWERVEQIFGSIGFDVADGPEIETDWMNFTALNNPDNHPARSMQDTFYVDGRDSEDKLLLLRTHTSPMQVRYARMHVEKYAGKAMPPIKVICPGRTYRVDSDATHSPMFNQVEGLWIGEDVSFADLKGVYTDFLRKFFERDDIQVRFRPSYFPFTEPSAEIDMAFGNGKWLEISGSGQVHPNVLRNMGLDPERYIGFAFGSGLERLTMLRYGINDLRLFFEGDVRFLRQFA</sequence>
<evidence type="ECO:0000255" key="1">
    <source>
        <dbReference type="HAMAP-Rule" id="MF_00281"/>
    </source>
</evidence>
<name>SYFA_CUPTR</name>
<reference key="1">
    <citation type="journal article" date="2008" name="Genome Res.">
        <title>Genome sequence of the beta-rhizobium Cupriavidus taiwanensis and comparative genomics of rhizobia.</title>
        <authorList>
            <person name="Amadou C."/>
            <person name="Pascal G."/>
            <person name="Mangenot S."/>
            <person name="Glew M."/>
            <person name="Bontemps C."/>
            <person name="Capela D."/>
            <person name="Carrere S."/>
            <person name="Cruveiller S."/>
            <person name="Dossat C."/>
            <person name="Lajus A."/>
            <person name="Marchetti M."/>
            <person name="Poinsot V."/>
            <person name="Rouy Z."/>
            <person name="Servin B."/>
            <person name="Saad M."/>
            <person name="Schenowitz C."/>
            <person name="Barbe V."/>
            <person name="Batut J."/>
            <person name="Medigue C."/>
            <person name="Masson-Boivin C."/>
        </authorList>
    </citation>
    <scope>NUCLEOTIDE SEQUENCE [LARGE SCALE GENOMIC DNA]</scope>
    <source>
        <strain>DSM 17343 / BCRC 17206 / CCUG 44338 / CIP 107171 / LMG 19424 / R1</strain>
    </source>
</reference>
<proteinExistence type="inferred from homology"/>
<keyword id="KW-0030">Aminoacyl-tRNA synthetase</keyword>
<keyword id="KW-0067">ATP-binding</keyword>
<keyword id="KW-0963">Cytoplasm</keyword>
<keyword id="KW-0436">Ligase</keyword>
<keyword id="KW-0460">Magnesium</keyword>
<keyword id="KW-0479">Metal-binding</keyword>
<keyword id="KW-0547">Nucleotide-binding</keyword>
<keyword id="KW-0648">Protein biosynthesis</keyword>
<protein>
    <recommendedName>
        <fullName evidence="1">Phenylalanine--tRNA ligase alpha subunit</fullName>
        <ecNumber evidence="1">6.1.1.20</ecNumber>
    </recommendedName>
    <alternativeName>
        <fullName evidence="1">Phenylalanyl-tRNA synthetase alpha subunit</fullName>
        <shortName evidence="1">PheRS</shortName>
    </alternativeName>
</protein>
<dbReference type="EC" id="6.1.1.20" evidence="1"/>
<dbReference type="EMBL" id="CU633749">
    <property type="protein sequence ID" value="CAQ69227.1"/>
    <property type="molecule type" value="Genomic_DNA"/>
</dbReference>
<dbReference type="RefSeq" id="WP_012352553.1">
    <property type="nucleotide sequence ID" value="NC_010528.1"/>
</dbReference>
<dbReference type="SMR" id="B3R4J5"/>
<dbReference type="GeneID" id="29760252"/>
<dbReference type="KEGG" id="cti:RALTA_A1265"/>
<dbReference type="eggNOG" id="COG0016">
    <property type="taxonomic scope" value="Bacteria"/>
</dbReference>
<dbReference type="HOGENOM" id="CLU_025086_0_1_4"/>
<dbReference type="BioCyc" id="CTAI977880:RALTA_RS06060-MONOMER"/>
<dbReference type="Proteomes" id="UP000001692">
    <property type="component" value="Chromosome 1"/>
</dbReference>
<dbReference type="GO" id="GO:0005737">
    <property type="term" value="C:cytoplasm"/>
    <property type="evidence" value="ECO:0007669"/>
    <property type="project" value="UniProtKB-SubCell"/>
</dbReference>
<dbReference type="GO" id="GO:0005524">
    <property type="term" value="F:ATP binding"/>
    <property type="evidence" value="ECO:0007669"/>
    <property type="project" value="UniProtKB-UniRule"/>
</dbReference>
<dbReference type="GO" id="GO:0000287">
    <property type="term" value="F:magnesium ion binding"/>
    <property type="evidence" value="ECO:0007669"/>
    <property type="project" value="UniProtKB-UniRule"/>
</dbReference>
<dbReference type="GO" id="GO:0004826">
    <property type="term" value="F:phenylalanine-tRNA ligase activity"/>
    <property type="evidence" value="ECO:0007669"/>
    <property type="project" value="UniProtKB-UniRule"/>
</dbReference>
<dbReference type="GO" id="GO:0000049">
    <property type="term" value="F:tRNA binding"/>
    <property type="evidence" value="ECO:0007669"/>
    <property type="project" value="InterPro"/>
</dbReference>
<dbReference type="GO" id="GO:0006432">
    <property type="term" value="P:phenylalanyl-tRNA aminoacylation"/>
    <property type="evidence" value="ECO:0007669"/>
    <property type="project" value="UniProtKB-UniRule"/>
</dbReference>
<dbReference type="CDD" id="cd00496">
    <property type="entry name" value="PheRS_alpha_core"/>
    <property type="match status" value="1"/>
</dbReference>
<dbReference type="FunFam" id="3.30.930.10:FF:000003">
    <property type="entry name" value="Phenylalanine--tRNA ligase alpha subunit"/>
    <property type="match status" value="1"/>
</dbReference>
<dbReference type="Gene3D" id="3.30.930.10">
    <property type="entry name" value="Bira Bifunctional Protein, Domain 2"/>
    <property type="match status" value="1"/>
</dbReference>
<dbReference type="HAMAP" id="MF_00281">
    <property type="entry name" value="Phe_tRNA_synth_alpha1"/>
    <property type="match status" value="1"/>
</dbReference>
<dbReference type="InterPro" id="IPR006195">
    <property type="entry name" value="aa-tRNA-synth_II"/>
</dbReference>
<dbReference type="InterPro" id="IPR045864">
    <property type="entry name" value="aa-tRNA-synth_II/BPL/LPL"/>
</dbReference>
<dbReference type="InterPro" id="IPR004529">
    <property type="entry name" value="Phe-tRNA-synth_IIc_asu"/>
</dbReference>
<dbReference type="InterPro" id="IPR004188">
    <property type="entry name" value="Phe-tRNA_ligase_II_N"/>
</dbReference>
<dbReference type="InterPro" id="IPR022911">
    <property type="entry name" value="Phe_tRNA_ligase_alpha1_bac"/>
</dbReference>
<dbReference type="InterPro" id="IPR002319">
    <property type="entry name" value="Phenylalanyl-tRNA_Synthase"/>
</dbReference>
<dbReference type="InterPro" id="IPR010978">
    <property type="entry name" value="tRNA-bd_arm"/>
</dbReference>
<dbReference type="NCBIfam" id="TIGR00468">
    <property type="entry name" value="pheS"/>
    <property type="match status" value="1"/>
</dbReference>
<dbReference type="PANTHER" id="PTHR11538:SF41">
    <property type="entry name" value="PHENYLALANINE--TRNA LIGASE, MITOCHONDRIAL"/>
    <property type="match status" value="1"/>
</dbReference>
<dbReference type="PANTHER" id="PTHR11538">
    <property type="entry name" value="PHENYLALANYL-TRNA SYNTHETASE"/>
    <property type="match status" value="1"/>
</dbReference>
<dbReference type="Pfam" id="PF02912">
    <property type="entry name" value="Phe_tRNA-synt_N"/>
    <property type="match status" value="1"/>
</dbReference>
<dbReference type="Pfam" id="PF01409">
    <property type="entry name" value="tRNA-synt_2d"/>
    <property type="match status" value="1"/>
</dbReference>
<dbReference type="SUPFAM" id="SSF55681">
    <property type="entry name" value="Class II aaRS and biotin synthetases"/>
    <property type="match status" value="1"/>
</dbReference>
<dbReference type="SUPFAM" id="SSF46589">
    <property type="entry name" value="tRNA-binding arm"/>
    <property type="match status" value="1"/>
</dbReference>
<dbReference type="PROSITE" id="PS50862">
    <property type="entry name" value="AA_TRNA_LIGASE_II"/>
    <property type="match status" value="1"/>
</dbReference>
<organism>
    <name type="scientific">Cupriavidus taiwanensis (strain DSM 17343 / BCRC 17206 / CCUG 44338 / CIP 107171 / LMG 19424 / R1)</name>
    <name type="common">Ralstonia taiwanensis (strain LMG 19424)</name>
    <dbReference type="NCBI Taxonomy" id="977880"/>
    <lineage>
        <taxon>Bacteria</taxon>
        <taxon>Pseudomonadati</taxon>
        <taxon>Pseudomonadota</taxon>
        <taxon>Betaproteobacteria</taxon>
        <taxon>Burkholderiales</taxon>
        <taxon>Burkholderiaceae</taxon>
        <taxon>Cupriavidus</taxon>
    </lineage>
</organism>